<reference key="1">
    <citation type="journal article" date="2006" name="J. Virol.">
        <title>Full genomic analysis of human rotavirus strain B4106 and lapine rotavirus strain 30/96 provides evidence for interspecies transmission.</title>
        <authorList>
            <person name="Matthijnssens J."/>
            <person name="Rahman M."/>
            <person name="Martella V."/>
            <person name="Xuelei Y."/>
            <person name="De Vos S."/>
            <person name="De Leener K."/>
            <person name="Ciarlet M."/>
            <person name="Buonavoglia C."/>
            <person name="Van Ranst M."/>
        </authorList>
    </citation>
    <scope>NUCLEOTIDE SEQUENCE [GENOMIC RNA]</scope>
</reference>
<accession>P0C710</accession>
<proteinExistence type="inferred from homology"/>
<dbReference type="EMBL" id="AY740731">
    <property type="status" value="NOT_ANNOTATED_CDS"/>
    <property type="molecule type" value="Genomic_RNA"/>
</dbReference>
<dbReference type="Proteomes" id="UP000008655">
    <property type="component" value="Genome"/>
</dbReference>
<dbReference type="GO" id="GO:0033650">
    <property type="term" value="C:host cell mitochondrion"/>
    <property type="evidence" value="ECO:0007669"/>
    <property type="project" value="UniProtKB-SubCell"/>
</dbReference>
<dbReference type="HAMAP" id="MF_04093">
    <property type="entry name" value="ROTA_NSP6"/>
    <property type="match status" value="1"/>
</dbReference>
<dbReference type="InterPro" id="IPR006950">
    <property type="entry name" value="Rotavirus_NSP6"/>
</dbReference>
<dbReference type="Pfam" id="PF04866">
    <property type="entry name" value="Rota_NS6"/>
    <property type="match status" value="1"/>
</dbReference>
<sequence length="96" mass="11557">MNHRQQRQLFLENLLVGMNCMFHQMQKRSINTCCQNLQKILDRLILLQTIHSPAFRLDRMQLRQMQTLACLWIHQHNHDHQVMLGAIKWISPLTKQ</sequence>
<organismHost>
    <name type="scientific">Homo sapiens</name>
    <name type="common">Human</name>
    <dbReference type="NCBI Taxonomy" id="9606"/>
</organismHost>
<name>NSP6_ROT41</name>
<organism>
    <name type="scientific">Rotavirus A (isolate RVA/Human/Belgium/B4106/2000/G3P11[14])</name>
    <name type="common">RV-A</name>
    <name type="synonym">Rotavirus A (isolate B4106)</name>
    <dbReference type="NCBI Taxonomy" id="578843"/>
    <lineage>
        <taxon>Viruses</taxon>
        <taxon>Riboviria</taxon>
        <taxon>Orthornavirae</taxon>
        <taxon>Duplornaviricota</taxon>
        <taxon>Resentoviricetes</taxon>
        <taxon>Reovirales</taxon>
        <taxon>Sedoreoviridae</taxon>
        <taxon>Rotavirus</taxon>
        <taxon>Rotavirus A</taxon>
    </lineage>
</organism>
<evidence type="ECO:0000255" key="1">
    <source>
        <dbReference type="HAMAP-Rule" id="MF_04093"/>
    </source>
</evidence>
<feature type="chain" id="PRO_0000369509" description="Non-structural protein 6">
    <location>
        <begin position="1"/>
        <end position="96"/>
    </location>
</feature>
<comment type="subunit">
    <text evidence="1">Interacts with NSP2 and NSP5.</text>
</comment>
<comment type="subcellular location">
    <subcellularLocation>
        <location evidence="1">Host cytoplasm</location>
    </subcellularLocation>
    <subcellularLocation>
        <location evidence="1">Host mitochondrion</location>
    </subcellularLocation>
    <text evidence="1">Found in spherical cytoplasmic structures, called viral factories, that appear early after infection and are the site of viral replication and packaging.</text>
</comment>
<comment type="similarity">
    <text evidence="1">Belongs to the rotavirus A NSP6 family.</text>
</comment>
<keyword id="KW-1035">Host cytoplasm</keyword>
<keyword id="KW-1045">Host mitochondrion</keyword>
<protein>
    <recommendedName>
        <fullName evidence="1">Non-structural protein 6</fullName>
        <shortName evidence="1">NSP6</shortName>
    </recommendedName>
</protein>